<proteinExistence type="evidence at protein level"/>
<name>OGFD2_HUMAN</name>
<evidence type="ECO:0000250" key="1"/>
<evidence type="ECO:0000255" key="2">
    <source>
        <dbReference type="PROSITE-ProRule" id="PRU00805"/>
    </source>
</evidence>
<evidence type="ECO:0000303" key="3">
    <source>
    </source>
</evidence>
<evidence type="ECO:0000303" key="4">
    <source>
    </source>
</evidence>
<evidence type="ECO:0000303" key="5">
    <source>
    </source>
</evidence>
<evidence type="ECO:0000303" key="6">
    <source ref="2"/>
</evidence>
<evidence type="ECO:0000305" key="7"/>
<keyword id="KW-0025">Alternative splicing</keyword>
<keyword id="KW-0223">Dioxygenase</keyword>
<keyword id="KW-0408">Iron</keyword>
<keyword id="KW-0479">Metal-binding</keyword>
<keyword id="KW-0560">Oxidoreductase</keyword>
<keyword id="KW-1267">Proteomics identification</keyword>
<keyword id="KW-1185">Reference proteome</keyword>
<keyword id="KW-0847">Vitamin C</keyword>
<accession>Q6N063</accession>
<accession>B3KT24</accession>
<accession>Q4KN13</accession>
<accession>Q6N023</accession>
<accession>Q9H8K6</accession>
<dbReference type="EC" id="1.14.11.-"/>
<dbReference type="EMBL" id="AK023553">
    <property type="protein sequence ID" value="BAB14610.1"/>
    <property type="molecule type" value="mRNA"/>
</dbReference>
<dbReference type="EMBL" id="AK094820">
    <property type="protein sequence ID" value="BAG52936.1"/>
    <property type="molecule type" value="mRNA"/>
</dbReference>
<dbReference type="EMBL" id="CR457316">
    <property type="protein sequence ID" value="CAG33597.1"/>
    <property type="molecule type" value="mRNA"/>
</dbReference>
<dbReference type="EMBL" id="BX640675">
    <property type="protein sequence ID" value="CAE45807.1"/>
    <property type="molecule type" value="mRNA"/>
</dbReference>
<dbReference type="EMBL" id="BX640734">
    <property type="protein sequence ID" value="CAE45849.1"/>
    <property type="status" value="ALT_SEQ"/>
    <property type="molecule type" value="mRNA"/>
</dbReference>
<dbReference type="EMBL" id="CH471054">
    <property type="protein sequence ID" value="EAW98364.1"/>
    <property type="molecule type" value="Genomic_DNA"/>
</dbReference>
<dbReference type="EMBL" id="BC098119">
    <property type="protein sequence ID" value="AAH98119.1"/>
    <property type="molecule type" value="mRNA"/>
</dbReference>
<dbReference type="EMBL" id="BC098293">
    <property type="protein sequence ID" value="AAH98293.1"/>
    <property type="molecule type" value="mRNA"/>
</dbReference>
<dbReference type="EMBL" id="BC101940">
    <property type="protein sequence ID" value="AAI01941.1"/>
    <property type="molecule type" value="mRNA"/>
</dbReference>
<dbReference type="EMBL" id="BC105637">
    <property type="protein sequence ID" value="AAI05638.1"/>
    <property type="molecule type" value="mRNA"/>
</dbReference>
<dbReference type="CCDS" id="CCDS41855.1">
    <molecule id="Q6N063-2"/>
</dbReference>
<dbReference type="CCDS" id="CCDS76617.1">
    <molecule id="Q6N063-1"/>
</dbReference>
<dbReference type="CCDS" id="CCDS76618.1">
    <molecule id="Q6N063-4"/>
</dbReference>
<dbReference type="RefSeq" id="NP_001291762.1">
    <molecule id="Q6N063-1"/>
    <property type="nucleotide sequence ID" value="NM_001304833.2"/>
</dbReference>
<dbReference type="RefSeq" id="NP_001291763.1">
    <molecule id="Q6N063-4"/>
    <property type="nucleotide sequence ID" value="NM_001304834.2"/>
</dbReference>
<dbReference type="RefSeq" id="NP_001291764.1">
    <molecule id="Q6N063-4"/>
    <property type="nucleotide sequence ID" value="NM_001304835.2"/>
</dbReference>
<dbReference type="RefSeq" id="NP_001291765.1">
    <molecule id="Q6N063-4"/>
    <property type="nucleotide sequence ID" value="NM_001304836.2"/>
</dbReference>
<dbReference type="RefSeq" id="NP_001291766.1">
    <molecule id="Q6N063-4"/>
    <property type="nucleotide sequence ID" value="NM_001304837.2"/>
</dbReference>
<dbReference type="RefSeq" id="NP_001291767.1">
    <molecule id="Q6N063-4"/>
    <property type="nucleotide sequence ID" value="NM_001304838.2"/>
</dbReference>
<dbReference type="RefSeq" id="NP_078899.1">
    <molecule id="Q6N063-2"/>
    <property type="nucleotide sequence ID" value="NM_024623.3"/>
</dbReference>
<dbReference type="SMR" id="Q6N063"/>
<dbReference type="BioGRID" id="122801">
    <property type="interactions" value="7"/>
</dbReference>
<dbReference type="FunCoup" id="Q6N063">
    <property type="interactions" value="143"/>
</dbReference>
<dbReference type="IntAct" id="Q6N063">
    <property type="interactions" value="9"/>
</dbReference>
<dbReference type="STRING" id="9606.ENSP00000228922"/>
<dbReference type="DrugBank" id="DB00126">
    <property type="generic name" value="Ascorbic acid"/>
</dbReference>
<dbReference type="GlyGen" id="Q6N063">
    <property type="glycosylation" value="1 site, 1 O-linked glycan (1 site)"/>
</dbReference>
<dbReference type="iPTMnet" id="Q6N063"/>
<dbReference type="PhosphoSitePlus" id="Q6N063"/>
<dbReference type="BioMuta" id="OGFOD2"/>
<dbReference type="DMDM" id="156633666"/>
<dbReference type="jPOST" id="Q6N063"/>
<dbReference type="MassIVE" id="Q6N063"/>
<dbReference type="PaxDb" id="9606-ENSP00000380544"/>
<dbReference type="PeptideAtlas" id="Q6N063"/>
<dbReference type="ProteomicsDB" id="66608">
    <molecule id="Q6N063-1"/>
</dbReference>
<dbReference type="ProteomicsDB" id="66609">
    <molecule id="Q6N063-2"/>
</dbReference>
<dbReference type="ProteomicsDB" id="66610">
    <molecule id="Q6N063-3"/>
</dbReference>
<dbReference type="ProteomicsDB" id="66611">
    <molecule id="Q6N063-4"/>
</dbReference>
<dbReference type="Pumba" id="Q6N063"/>
<dbReference type="Antibodypedia" id="31731">
    <property type="antibodies" value="123 antibodies from 27 providers"/>
</dbReference>
<dbReference type="DNASU" id="79676"/>
<dbReference type="Ensembl" id="ENST00000228922.12">
    <molecule id="Q6N063-1"/>
    <property type="protein sequence ID" value="ENSP00000228922.7"/>
    <property type="gene ID" value="ENSG00000111325.16"/>
</dbReference>
<dbReference type="Ensembl" id="ENST00000397389.6">
    <molecule id="Q6N063-2"/>
    <property type="protein sequence ID" value="ENSP00000380544.2"/>
    <property type="gene ID" value="ENSG00000111325.16"/>
</dbReference>
<dbReference type="Ensembl" id="ENST00000454694.6">
    <molecule id="Q6N063-4"/>
    <property type="protein sequence ID" value="ENSP00000394175.2"/>
    <property type="gene ID" value="ENSG00000111325.16"/>
</dbReference>
<dbReference type="Ensembl" id="ENST00000536150.5">
    <molecule id="Q6N063-4"/>
    <property type="protein sequence ID" value="ENSP00000438327.1"/>
    <property type="gene ID" value="ENSG00000111325.16"/>
</dbReference>
<dbReference type="Ensembl" id="ENST00000538628.5">
    <molecule id="Q6N063-4"/>
    <property type="protein sequence ID" value="ENSP00000444608.1"/>
    <property type="gene ID" value="ENSG00000111325.16"/>
</dbReference>
<dbReference type="Ensembl" id="ENST00000538755.5">
    <molecule id="Q6N063-4"/>
    <property type="protein sequence ID" value="ENSP00000442817.1"/>
    <property type="gene ID" value="ENSG00000111325.16"/>
</dbReference>
<dbReference type="Ensembl" id="ENST00000540324.5">
    <molecule id="Q6N063-3"/>
    <property type="protein sequence ID" value="ENSP00000439667.1"/>
    <property type="gene ID" value="ENSG00000111325.16"/>
</dbReference>
<dbReference type="Ensembl" id="ENST00000545317.5">
    <molecule id="Q6N063-4"/>
    <property type="protein sequence ID" value="ENSP00000438192.1"/>
    <property type="gene ID" value="ENSG00000111325.16"/>
</dbReference>
<dbReference type="Ensembl" id="ENST00000545612.5">
    <molecule id="Q6N063-4"/>
    <property type="protein sequence ID" value="ENSP00000444436.1"/>
    <property type="gene ID" value="ENSG00000111325.16"/>
</dbReference>
<dbReference type="GeneID" id="79676"/>
<dbReference type="KEGG" id="hsa:79676"/>
<dbReference type="MANE-Select" id="ENST00000228922.12">
    <property type="protein sequence ID" value="ENSP00000228922.7"/>
    <property type="RefSeq nucleotide sequence ID" value="NM_001304833.2"/>
    <property type="RefSeq protein sequence ID" value="NP_001291762.1"/>
</dbReference>
<dbReference type="UCSC" id="uc001uds.2">
    <molecule id="Q6N063-1"/>
    <property type="organism name" value="human"/>
</dbReference>
<dbReference type="AGR" id="HGNC:25823"/>
<dbReference type="CTD" id="79676"/>
<dbReference type="DisGeNET" id="79676"/>
<dbReference type="GeneCards" id="OGFOD2"/>
<dbReference type="HGNC" id="HGNC:25823">
    <property type="gene designation" value="OGFOD2"/>
</dbReference>
<dbReference type="HPA" id="ENSG00000111325">
    <property type="expression patterns" value="Low tissue specificity"/>
</dbReference>
<dbReference type="neXtProt" id="NX_Q6N063"/>
<dbReference type="OpenTargets" id="ENSG00000111325"/>
<dbReference type="PharmGKB" id="PA143485569"/>
<dbReference type="VEuPathDB" id="HostDB:ENSG00000111325"/>
<dbReference type="eggNOG" id="KOG1971">
    <property type="taxonomic scope" value="Eukaryota"/>
</dbReference>
<dbReference type="GeneTree" id="ENSGT00940000153974"/>
<dbReference type="HOGENOM" id="CLU_045835_1_0_1"/>
<dbReference type="InParanoid" id="Q6N063"/>
<dbReference type="OMA" id="CQAFVDE"/>
<dbReference type="OrthoDB" id="1736837at2759"/>
<dbReference type="PAN-GO" id="Q6N063">
    <property type="GO annotations" value="0 GO annotations based on evolutionary models"/>
</dbReference>
<dbReference type="PhylomeDB" id="Q6N063"/>
<dbReference type="TreeFam" id="TF329650"/>
<dbReference type="PathwayCommons" id="Q6N063"/>
<dbReference type="SignaLink" id="Q6N063"/>
<dbReference type="BioGRID-ORCS" id="79676">
    <property type="hits" value="11 hits in 1156 CRISPR screens"/>
</dbReference>
<dbReference type="ChiTaRS" id="OGFOD2">
    <property type="organism name" value="human"/>
</dbReference>
<dbReference type="GenomeRNAi" id="79676"/>
<dbReference type="Pharos" id="Q6N063">
    <property type="development level" value="Tdark"/>
</dbReference>
<dbReference type="PRO" id="PR:Q6N063"/>
<dbReference type="Proteomes" id="UP000005640">
    <property type="component" value="Chromosome 12"/>
</dbReference>
<dbReference type="RNAct" id="Q6N063">
    <property type="molecule type" value="protein"/>
</dbReference>
<dbReference type="Bgee" id="ENSG00000111325">
    <property type="expression patterns" value="Expressed in right uterine tube and 99 other cell types or tissues"/>
</dbReference>
<dbReference type="ExpressionAtlas" id="Q6N063">
    <property type="expression patterns" value="baseline and differential"/>
</dbReference>
<dbReference type="GO" id="GO:0051213">
    <property type="term" value="F:dioxygenase activity"/>
    <property type="evidence" value="ECO:0007669"/>
    <property type="project" value="UniProtKB-KW"/>
</dbReference>
<dbReference type="GO" id="GO:0005506">
    <property type="term" value="F:iron ion binding"/>
    <property type="evidence" value="ECO:0007669"/>
    <property type="project" value="InterPro"/>
</dbReference>
<dbReference type="GO" id="GO:0031418">
    <property type="term" value="F:L-ascorbic acid binding"/>
    <property type="evidence" value="ECO:0007669"/>
    <property type="project" value="UniProtKB-KW"/>
</dbReference>
<dbReference type="GO" id="GO:0016705">
    <property type="term" value="F:oxidoreductase activity, acting on paired donors, with incorporation or reduction of molecular oxygen"/>
    <property type="evidence" value="ECO:0007669"/>
    <property type="project" value="InterPro"/>
</dbReference>
<dbReference type="Gene3D" id="2.60.120.620">
    <property type="entry name" value="q2cbj1_9rhob like domain"/>
    <property type="match status" value="1"/>
</dbReference>
<dbReference type="InterPro" id="IPR005123">
    <property type="entry name" value="Oxoglu/Fe-dep_dioxygenase_dom"/>
</dbReference>
<dbReference type="InterPro" id="IPR006620">
    <property type="entry name" value="Pro_4_hyd_alph"/>
</dbReference>
<dbReference type="PANTHER" id="PTHR24014">
    <property type="entry name" value="2-OXOGLUTARATE AND IRON-DEPENDENT OXYGENASE DOMAIN-CONTAINING PROTEIN 2"/>
    <property type="match status" value="1"/>
</dbReference>
<dbReference type="PANTHER" id="PTHR24014:SF4">
    <property type="entry name" value="2-OXOGLUTARATE AND IRON-DEPENDENT OXYGENASE DOMAIN-CONTAINING PROTEIN 2"/>
    <property type="match status" value="1"/>
</dbReference>
<dbReference type="Pfam" id="PF25238">
    <property type="entry name" value="OGFOD2-like"/>
    <property type="match status" value="1"/>
</dbReference>
<dbReference type="SMART" id="SM00702">
    <property type="entry name" value="P4Hc"/>
    <property type="match status" value="1"/>
</dbReference>
<dbReference type="PROSITE" id="PS51471">
    <property type="entry name" value="FE2OG_OXY"/>
    <property type="match status" value="1"/>
</dbReference>
<comment type="cofactor">
    <cofactor evidence="2">
        <name>Fe(2+)</name>
        <dbReference type="ChEBI" id="CHEBI:29033"/>
    </cofactor>
    <text evidence="2">Binds 1 Fe(2+) ion per subunit.</text>
</comment>
<comment type="cofactor">
    <cofactor evidence="1">
        <name>L-ascorbate</name>
        <dbReference type="ChEBI" id="CHEBI:38290"/>
    </cofactor>
</comment>
<comment type="interaction">
    <interactant intactId="EBI-22006224">
        <id>Q6N063-2</id>
    </interactant>
    <interactant intactId="EBI-718729">
        <id>P55212</id>
        <label>CASP6</label>
    </interactant>
    <organismsDiffer>false</organismsDiffer>
    <experiments>3</experiments>
</comment>
<comment type="interaction">
    <interactant intactId="EBI-22006224">
        <id>Q6N063-2</id>
    </interactant>
    <interactant intactId="EBI-745535">
        <id>Q8NI60</id>
        <label>COQ8A</label>
    </interactant>
    <organismsDiffer>false</organismsDiffer>
    <experiments>3</experiments>
</comment>
<comment type="interaction">
    <interactant intactId="EBI-22006224">
        <id>Q6N063-2</id>
    </interactant>
    <interactant intactId="EBI-473886">
        <id>O00291</id>
        <label>HIP1</label>
    </interactant>
    <organismsDiffer>false</organismsDiffer>
    <experiments>3</experiments>
</comment>
<comment type="interaction">
    <interactant intactId="EBI-22006224">
        <id>Q6N063-2</id>
    </interactant>
    <interactant intactId="EBI-21591415">
        <id>P13473-2</id>
        <label>LAMP2</label>
    </interactant>
    <organismsDiffer>false</organismsDiffer>
    <experiments>3</experiments>
</comment>
<comment type="interaction">
    <interactant intactId="EBI-22006224">
        <id>Q6N063-2</id>
    </interactant>
    <interactant intactId="EBI-5280197">
        <id>O75400-2</id>
        <label>PRPF40A</label>
    </interactant>
    <organismsDiffer>false</organismsDiffer>
    <experiments>3</experiments>
</comment>
<comment type="interaction">
    <interactant intactId="EBI-22006224">
        <id>Q6N063-2</id>
    </interactant>
    <interactant intactId="EBI-286642">
        <id>P62826</id>
        <label>RAN</label>
    </interactant>
    <organismsDiffer>false</organismsDiffer>
    <experiments>3</experiments>
</comment>
<comment type="alternative products">
    <event type="alternative splicing"/>
    <isoform>
        <id>Q6N063-1</id>
        <name>1</name>
        <sequence type="displayed"/>
    </isoform>
    <isoform>
        <id>Q6N063-2</id>
        <name>2</name>
        <sequence type="described" ref="VSP_025856 VSP_025857"/>
    </isoform>
    <isoform>
        <id>Q6N063-3</id>
        <name>3</name>
        <sequence type="described" ref="VSP_025858 VSP_025859"/>
    </isoform>
    <isoform>
        <id>Q6N063-4</id>
        <name>4</name>
        <sequence type="described" ref="VSP_025855"/>
    </isoform>
</comment>
<comment type="similarity">
    <text evidence="7">Belongs to the OGFOD2 family.</text>
</comment>
<comment type="sequence caution" evidence="7">
    <conflict type="erroneous translation">
        <sequence resource="EMBL-CDS" id="CAE45849"/>
    </conflict>
    <text>Wrong choice of frame.</text>
</comment>
<comment type="sequence caution" evidence="7">
    <conflict type="frameshift">
        <sequence resource="EMBL-CDS" id="CAE45849"/>
    </conflict>
</comment>
<sequence>MATVGAPRHFCRCACFCTDNLYVARYGLHVRFRGEQQLRRDYGPILRSRGCVSAKDFQQLLAELEQEVERRQRLGQESAARKALIASSYHPARPEVYDSLQDAALAPEFLAVTEYSVSPDADLKGLLQRLETVSEEKRIYRVPVFTAPFCQALLEELEHFEQSDMPKGRPNTMNNYGVLLHELGLDEPLMTPLRERFLQPLMALLYPDCGGGRLDSHRAFVVKYAPGQDLELGCHYDNAELTLNVALGKVFTGGALYFGGLFQAPTALTEPLEVEHVVGQGVLHRGGQLHGARPLGTGERWNLVVWLRASAVRNSLCPMCCREPDLVDDEGFGDGFTREEPATVDVCALT</sequence>
<reference key="1">
    <citation type="journal article" date="2004" name="Nat. Genet.">
        <title>Complete sequencing and characterization of 21,243 full-length human cDNAs.</title>
        <authorList>
            <person name="Ota T."/>
            <person name="Suzuki Y."/>
            <person name="Nishikawa T."/>
            <person name="Otsuki T."/>
            <person name="Sugiyama T."/>
            <person name="Irie R."/>
            <person name="Wakamatsu A."/>
            <person name="Hayashi K."/>
            <person name="Sato H."/>
            <person name="Nagai K."/>
            <person name="Kimura K."/>
            <person name="Makita H."/>
            <person name="Sekine M."/>
            <person name="Obayashi M."/>
            <person name="Nishi T."/>
            <person name="Shibahara T."/>
            <person name="Tanaka T."/>
            <person name="Ishii S."/>
            <person name="Yamamoto J."/>
            <person name="Saito K."/>
            <person name="Kawai Y."/>
            <person name="Isono Y."/>
            <person name="Nakamura Y."/>
            <person name="Nagahari K."/>
            <person name="Murakami K."/>
            <person name="Yasuda T."/>
            <person name="Iwayanagi T."/>
            <person name="Wagatsuma M."/>
            <person name="Shiratori A."/>
            <person name="Sudo H."/>
            <person name="Hosoiri T."/>
            <person name="Kaku Y."/>
            <person name="Kodaira H."/>
            <person name="Kondo H."/>
            <person name="Sugawara M."/>
            <person name="Takahashi M."/>
            <person name="Kanda K."/>
            <person name="Yokoi T."/>
            <person name="Furuya T."/>
            <person name="Kikkawa E."/>
            <person name="Omura Y."/>
            <person name="Abe K."/>
            <person name="Kamihara K."/>
            <person name="Katsuta N."/>
            <person name="Sato K."/>
            <person name="Tanikawa M."/>
            <person name="Yamazaki M."/>
            <person name="Ninomiya K."/>
            <person name="Ishibashi T."/>
            <person name="Yamashita H."/>
            <person name="Murakawa K."/>
            <person name="Fujimori K."/>
            <person name="Tanai H."/>
            <person name="Kimata M."/>
            <person name="Watanabe M."/>
            <person name="Hiraoka S."/>
            <person name="Chiba Y."/>
            <person name="Ishida S."/>
            <person name="Ono Y."/>
            <person name="Takiguchi S."/>
            <person name="Watanabe S."/>
            <person name="Yosida M."/>
            <person name="Hotuta T."/>
            <person name="Kusano J."/>
            <person name="Kanehori K."/>
            <person name="Takahashi-Fujii A."/>
            <person name="Hara H."/>
            <person name="Tanase T.-O."/>
            <person name="Nomura Y."/>
            <person name="Togiya S."/>
            <person name="Komai F."/>
            <person name="Hara R."/>
            <person name="Takeuchi K."/>
            <person name="Arita M."/>
            <person name="Imose N."/>
            <person name="Musashino K."/>
            <person name="Yuuki H."/>
            <person name="Oshima A."/>
            <person name="Sasaki N."/>
            <person name="Aotsuka S."/>
            <person name="Yoshikawa Y."/>
            <person name="Matsunawa H."/>
            <person name="Ichihara T."/>
            <person name="Shiohata N."/>
            <person name="Sano S."/>
            <person name="Moriya S."/>
            <person name="Momiyama H."/>
            <person name="Satoh N."/>
            <person name="Takami S."/>
            <person name="Terashima Y."/>
            <person name="Suzuki O."/>
            <person name="Nakagawa S."/>
            <person name="Senoh A."/>
            <person name="Mizoguchi H."/>
            <person name="Goto Y."/>
            <person name="Shimizu F."/>
            <person name="Wakebe H."/>
            <person name="Hishigaki H."/>
            <person name="Watanabe T."/>
            <person name="Sugiyama A."/>
            <person name="Takemoto M."/>
            <person name="Kawakami B."/>
            <person name="Yamazaki M."/>
            <person name="Watanabe K."/>
            <person name="Kumagai A."/>
            <person name="Itakura S."/>
            <person name="Fukuzumi Y."/>
            <person name="Fujimori Y."/>
            <person name="Komiyama M."/>
            <person name="Tashiro H."/>
            <person name="Tanigami A."/>
            <person name="Fujiwara T."/>
            <person name="Ono T."/>
            <person name="Yamada K."/>
            <person name="Fujii Y."/>
            <person name="Ozaki K."/>
            <person name="Hirao M."/>
            <person name="Ohmori Y."/>
            <person name="Kawabata A."/>
            <person name="Hikiji T."/>
            <person name="Kobatake N."/>
            <person name="Inagaki H."/>
            <person name="Ikema Y."/>
            <person name="Okamoto S."/>
            <person name="Okitani R."/>
            <person name="Kawakami T."/>
            <person name="Noguchi S."/>
            <person name="Itoh T."/>
            <person name="Shigeta K."/>
            <person name="Senba T."/>
            <person name="Matsumura K."/>
            <person name="Nakajima Y."/>
            <person name="Mizuno T."/>
            <person name="Morinaga M."/>
            <person name="Sasaki M."/>
            <person name="Togashi T."/>
            <person name="Oyama M."/>
            <person name="Hata H."/>
            <person name="Watanabe M."/>
            <person name="Komatsu T."/>
            <person name="Mizushima-Sugano J."/>
            <person name="Satoh T."/>
            <person name="Shirai Y."/>
            <person name="Takahashi Y."/>
            <person name="Nakagawa K."/>
            <person name="Okumura K."/>
            <person name="Nagase T."/>
            <person name="Nomura N."/>
            <person name="Kikuchi H."/>
            <person name="Masuho Y."/>
            <person name="Yamashita R."/>
            <person name="Nakai K."/>
            <person name="Yada T."/>
            <person name="Nakamura Y."/>
            <person name="Ohara O."/>
            <person name="Isogai T."/>
            <person name="Sugano S."/>
        </authorList>
    </citation>
    <scope>NUCLEOTIDE SEQUENCE [LARGE SCALE MRNA] (ISOFORMS 1 AND 2)</scope>
    <source>
        <tissue>Brain</tissue>
        <tissue>Placenta</tissue>
    </source>
</reference>
<reference key="2">
    <citation type="submission" date="2004-06" db="EMBL/GenBank/DDBJ databases">
        <title>Cloning of human full open reading frames in Gateway(TM) system entry vector (pDONR201).</title>
        <authorList>
            <person name="Ebert L."/>
            <person name="Schick M."/>
            <person name="Neubert P."/>
            <person name="Schatten R."/>
            <person name="Henze S."/>
            <person name="Korn B."/>
        </authorList>
    </citation>
    <scope>NUCLEOTIDE SEQUENCE [LARGE SCALE MRNA] (ISOFORM 2)</scope>
</reference>
<reference key="3">
    <citation type="journal article" date="2007" name="BMC Genomics">
        <title>The full-ORF clone resource of the German cDNA consortium.</title>
        <authorList>
            <person name="Bechtel S."/>
            <person name="Rosenfelder H."/>
            <person name="Duda A."/>
            <person name="Schmidt C.P."/>
            <person name="Ernst U."/>
            <person name="Wellenreuther R."/>
            <person name="Mehrle A."/>
            <person name="Schuster C."/>
            <person name="Bahr A."/>
            <person name="Bloecker H."/>
            <person name="Heubner D."/>
            <person name="Hoerlein A."/>
            <person name="Michel G."/>
            <person name="Wedler H."/>
            <person name="Koehrer K."/>
            <person name="Ottenwaelder B."/>
            <person name="Poustka A."/>
            <person name="Wiemann S."/>
            <person name="Schupp I."/>
        </authorList>
    </citation>
    <scope>NUCLEOTIDE SEQUENCE [LARGE SCALE MRNA] (ISOFORMS 1 AND 3)</scope>
    <source>
        <tissue>Colon endothelium</tissue>
        <tissue>Fetal liver</tissue>
    </source>
</reference>
<reference key="4">
    <citation type="submission" date="2005-07" db="EMBL/GenBank/DDBJ databases">
        <authorList>
            <person name="Mural R.J."/>
            <person name="Istrail S."/>
            <person name="Sutton G.G."/>
            <person name="Florea L."/>
            <person name="Halpern A.L."/>
            <person name="Mobarry C.M."/>
            <person name="Lippert R."/>
            <person name="Walenz B."/>
            <person name="Shatkay H."/>
            <person name="Dew I."/>
            <person name="Miller J.R."/>
            <person name="Flanigan M.J."/>
            <person name="Edwards N.J."/>
            <person name="Bolanos R."/>
            <person name="Fasulo D."/>
            <person name="Halldorsson B.V."/>
            <person name="Hannenhalli S."/>
            <person name="Turner R."/>
            <person name="Yooseph S."/>
            <person name="Lu F."/>
            <person name="Nusskern D.R."/>
            <person name="Shue B.C."/>
            <person name="Zheng X.H."/>
            <person name="Zhong F."/>
            <person name="Delcher A.L."/>
            <person name="Huson D.H."/>
            <person name="Kravitz S.A."/>
            <person name="Mouchard L."/>
            <person name="Reinert K."/>
            <person name="Remington K.A."/>
            <person name="Clark A.G."/>
            <person name="Waterman M.S."/>
            <person name="Eichler E.E."/>
            <person name="Adams M.D."/>
            <person name="Hunkapiller M.W."/>
            <person name="Myers E.W."/>
            <person name="Venter J.C."/>
        </authorList>
    </citation>
    <scope>NUCLEOTIDE SEQUENCE [LARGE SCALE GENOMIC DNA]</scope>
</reference>
<reference key="5">
    <citation type="journal article" date="2004" name="Genome Res.">
        <title>The status, quality, and expansion of the NIH full-length cDNA project: the Mammalian Gene Collection (MGC).</title>
        <authorList>
            <consortium name="The MGC Project Team"/>
        </authorList>
    </citation>
    <scope>NUCLEOTIDE SEQUENCE [LARGE SCALE MRNA] (ISOFORM 4)</scope>
</reference>
<gene>
    <name type="primary">OGFOD2</name>
</gene>
<protein>
    <recommendedName>
        <fullName>2-oxoglutarate and iron-dependent oxygenase domain-containing protein 2</fullName>
        <ecNumber>1.14.11.-</ecNumber>
    </recommendedName>
</protein>
<feature type="chain" id="PRO_0000288978" description="2-oxoglutarate and iron-dependent oxygenase domain-containing protein 2">
    <location>
        <begin position="1"/>
        <end position="350"/>
    </location>
</feature>
<feature type="domain" description="Fe2OG dioxygenase" evidence="2">
    <location>
        <begin position="215"/>
        <end position="309"/>
    </location>
</feature>
<feature type="binding site" evidence="2">
    <location>
        <position position="235"/>
    </location>
    <ligand>
        <name>Fe cation</name>
        <dbReference type="ChEBI" id="CHEBI:24875"/>
    </ligand>
</feature>
<feature type="binding site" evidence="2">
    <location>
        <position position="237"/>
    </location>
    <ligand>
        <name>Fe cation</name>
        <dbReference type="ChEBI" id="CHEBI:24875"/>
    </ligand>
</feature>
<feature type="binding site" evidence="2">
    <location>
        <position position="290"/>
    </location>
    <ligand>
        <name>Fe cation</name>
        <dbReference type="ChEBI" id="CHEBI:24875"/>
    </ligand>
</feature>
<feature type="binding site" evidence="2">
    <location>
        <position position="300"/>
    </location>
    <ligand>
        <name>2-oxoglutarate</name>
        <dbReference type="ChEBI" id="CHEBI:16810"/>
    </ligand>
</feature>
<feature type="splice variant" id="VSP_025855" description="In isoform 4." evidence="4">
    <location>
        <begin position="1"/>
        <end position="164"/>
    </location>
</feature>
<feature type="splice variant" id="VSP_025856" description="In isoform 2." evidence="3 6">
    <location>
        <begin position="1"/>
        <end position="60"/>
    </location>
</feature>
<feature type="splice variant" id="VSP_025857" description="In isoform 2." evidence="3 6">
    <original>LA</original>
    <variation>MV</variation>
    <location>
        <begin position="61"/>
        <end position="62"/>
    </location>
</feature>
<feature type="splice variant" id="VSP_025858" description="In isoform 3." evidence="5">
    <original>L</original>
    <variation>WPQEDGRPHLVTTLCHPSLSRRWSGGSGWGRSQQLGKPSSRVPTTRHGLRSTTHCRMQLWPPSSWP</variation>
    <location>
        <position position="64"/>
    </location>
</feature>
<feature type="splice variant" id="VSP_025859" description="In isoform 3." evidence="5">
    <location>
        <begin position="65"/>
        <end position="350"/>
    </location>
</feature>
<feature type="sequence conflict" description="In Ref. 2; CAE45807." evidence="7" ref="2">
    <original>N</original>
    <variation>S</variation>
    <location>
        <position position="244"/>
    </location>
</feature>
<feature type="sequence conflict" description="In Ref. 5; AAH98119/AAI01941." evidence="7" ref="5">
    <original>A</original>
    <variation>T</variation>
    <location>
        <position position="311"/>
    </location>
</feature>
<organism>
    <name type="scientific">Homo sapiens</name>
    <name type="common">Human</name>
    <dbReference type="NCBI Taxonomy" id="9606"/>
    <lineage>
        <taxon>Eukaryota</taxon>
        <taxon>Metazoa</taxon>
        <taxon>Chordata</taxon>
        <taxon>Craniata</taxon>
        <taxon>Vertebrata</taxon>
        <taxon>Euteleostomi</taxon>
        <taxon>Mammalia</taxon>
        <taxon>Eutheria</taxon>
        <taxon>Euarchontoglires</taxon>
        <taxon>Primates</taxon>
        <taxon>Haplorrhini</taxon>
        <taxon>Catarrhini</taxon>
        <taxon>Hominidae</taxon>
        <taxon>Homo</taxon>
    </lineage>
</organism>